<name>RNFE_PSEA6</name>
<proteinExistence type="inferred from homology"/>
<gene>
    <name evidence="1" type="primary">rnfE</name>
    <name type="ordered locus">Patl_2970</name>
</gene>
<organism>
    <name type="scientific">Pseudoalteromonas atlantica (strain T6c / ATCC BAA-1087)</name>
    <dbReference type="NCBI Taxonomy" id="3042615"/>
    <lineage>
        <taxon>Bacteria</taxon>
        <taxon>Pseudomonadati</taxon>
        <taxon>Pseudomonadota</taxon>
        <taxon>Gammaproteobacteria</taxon>
        <taxon>Alteromonadales</taxon>
        <taxon>Alteromonadaceae</taxon>
        <taxon>Paraglaciecola</taxon>
    </lineage>
</organism>
<comment type="function">
    <text evidence="1">Part of a membrane-bound complex that couples electron transfer with translocation of ions across the membrane.</text>
</comment>
<comment type="subunit">
    <text evidence="1">The complex is composed of six subunits: RnfA, RnfB, RnfC, RnfD, RnfE and RnfG.</text>
</comment>
<comment type="subcellular location">
    <subcellularLocation>
        <location evidence="1">Cell inner membrane</location>
        <topology evidence="1">Multi-pass membrane protein</topology>
    </subcellularLocation>
</comment>
<comment type="similarity">
    <text evidence="1">Belongs to the NqrDE/RnfAE family.</text>
</comment>
<protein>
    <recommendedName>
        <fullName evidence="1">Ion-translocating oxidoreductase complex subunit E</fullName>
        <ecNumber evidence="1">7.-.-.-</ecNumber>
    </recommendedName>
    <alternativeName>
        <fullName evidence="1">Rnf electron transport complex subunit E</fullName>
    </alternativeName>
</protein>
<sequence length="232" mass="24980">MNEFKQLSWQGLWKNNPALVQLLGLCPLLAVTATVTNGLGLGLATTLVLIGSNATVSIIRNLVPNEIRIPIFVMIIAAFVTVVQLLMNAYTYELYQALGIFIPLIVTNCAIIGRAEAYASKNPIGYAAFDGLMMGLGFTVVLVLLGAMRELLGYGTLFAGANLLLGDWATSLKVTIFTTDSPFLLAILPPGAFLGMGLLIAAKNILDKRFERMFAAKQEAKVVQRARVTAET</sequence>
<dbReference type="EC" id="7.-.-.-" evidence="1"/>
<dbReference type="EMBL" id="CP000388">
    <property type="protein sequence ID" value="ABG41478.1"/>
    <property type="molecule type" value="Genomic_DNA"/>
</dbReference>
<dbReference type="RefSeq" id="WP_011575730.1">
    <property type="nucleotide sequence ID" value="NC_008228.1"/>
</dbReference>
<dbReference type="SMR" id="Q15RL0"/>
<dbReference type="STRING" id="342610.Patl_2970"/>
<dbReference type="KEGG" id="pat:Patl_2970"/>
<dbReference type="eggNOG" id="COG4660">
    <property type="taxonomic scope" value="Bacteria"/>
</dbReference>
<dbReference type="HOGENOM" id="CLU_046659_1_0_6"/>
<dbReference type="OrthoDB" id="9782945at2"/>
<dbReference type="Proteomes" id="UP000001981">
    <property type="component" value="Chromosome"/>
</dbReference>
<dbReference type="GO" id="GO:0005886">
    <property type="term" value="C:plasma membrane"/>
    <property type="evidence" value="ECO:0007669"/>
    <property type="project" value="UniProtKB-SubCell"/>
</dbReference>
<dbReference type="GO" id="GO:0022900">
    <property type="term" value="P:electron transport chain"/>
    <property type="evidence" value="ECO:0007669"/>
    <property type="project" value="UniProtKB-UniRule"/>
</dbReference>
<dbReference type="HAMAP" id="MF_00478">
    <property type="entry name" value="RsxE_RnfE"/>
    <property type="match status" value="1"/>
</dbReference>
<dbReference type="InterPro" id="IPR003667">
    <property type="entry name" value="NqrDE/RnfAE"/>
</dbReference>
<dbReference type="InterPro" id="IPR010968">
    <property type="entry name" value="RnfE"/>
</dbReference>
<dbReference type="NCBIfam" id="NF009070">
    <property type="entry name" value="PRK12405.1"/>
    <property type="match status" value="1"/>
</dbReference>
<dbReference type="NCBIfam" id="TIGR01948">
    <property type="entry name" value="rnfE"/>
    <property type="match status" value="1"/>
</dbReference>
<dbReference type="PANTHER" id="PTHR30586">
    <property type="entry name" value="ELECTRON TRANSPORT COMPLEX PROTEIN RNFE"/>
    <property type="match status" value="1"/>
</dbReference>
<dbReference type="PANTHER" id="PTHR30586:SF0">
    <property type="entry name" value="ION-TRANSLOCATING OXIDOREDUCTASE COMPLEX SUBUNIT E"/>
    <property type="match status" value="1"/>
</dbReference>
<dbReference type="Pfam" id="PF02508">
    <property type="entry name" value="Rnf-Nqr"/>
    <property type="match status" value="1"/>
</dbReference>
<dbReference type="PIRSF" id="PIRSF006102">
    <property type="entry name" value="NQR_DE"/>
    <property type="match status" value="1"/>
</dbReference>
<accession>Q15RL0</accession>
<keyword id="KW-0997">Cell inner membrane</keyword>
<keyword id="KW-1003">Cell membrane</keyword>
<keyword id="KW-0249">Electron transport</keyword>
<keyword id="KW-0472">Membrane</keyword>
<keyword id="KW-1278">Translocase</keyword>
<keyword id="KW-0812">Transmembrane</keyword>
<keyword id="KW-1133">Transmembrane helix</keyword>
<keyword id="KW-0813">Transport</keyword>
<evidence type="ECO:0000255" key="1">
    <source>
        <dbReference type="HAMAP-Rule" id="MF_00478"/>
    </source>
</evidence>
<feature type="chain" id="PRO_1000014096" description="Ion-translocating oxidoreductase complex subunit E">
    <location>
        <begin position="1"/>
        <end position="232"/>
    </location>
</feature>
<feature type="transmembrane region" description="Helical" evidence="1">
    <location>
        <begin position="18"/>
        <end position="38"/>
    </location>
</feature>
<feature type="transmembrane region" description="Helical" evidence="1">
    <location>
        <begin position="39"/>
        <end position="59"/>
    </location>
</feature>
<feature type="transmembrane region" description="Helical" evidence="1">
    <location>
        <begin position="69"/>
        <end position="89"/>
    </location>
</feature>
<feature type="transmembrane region" description="Helical" evidence="1">
    <location>
        <begin position="93"/>
        <end position="113"/>
    </location>
</feature>
<feature type="transmembrane region" description="Helical" evidence="1">
    <location>
        <begin position="128"/>
        <end position="148"/>
    </location>
</feature>
<feature type="transmembrane region" description="Helical" evidence="1">
    <location>
        <begin position="182"/>
        <end position="202"/>
    </location>
</feature>
<reference key="1">
    <citation type="submission" date="2006-06" db="EMBL/GenBank/DDBJ databases">
        <title>Complete sequence of Pseudoalteromonas atlantica T6c.</title>
        <authorList>
            <consortium name="US DOE Joint Genome Institute"/>
            <person name="Copeland A."/>
            <person name="Lucas S."/>
            <person name="Lapidus A."/>
            <person name="Barry K."/>
            <person name="Detter J.C."/>
            <person name="Glavina del Rio T."/>
            <person name="Hammon N."/>
            <person name="Israni S."/>
            <person name="Dalin E."/>
            <person name="Tice H."/>
            <person name="Pitluck S."/>
            <person name="Saunders E."/>
            <person name="Brettin T."/>
            <person name="Bruce D."/>
            <person name="Han C."/>
            <person name="Tapia R."/>
            <person name="Gilna P."/>
            <person name="Schmutz J."/>
            <person name="Larimer F."/>
            <person name="Land M."/>
            <person name="Hauser L."/>
            <person name="Kyrpides N."/>
            <person name="Kim E."/>
            <person name="Karls A.C."/>
            <person name="Bartlett D."/>
            <person name="Higgins B.P."/>
            <person name="Richardson P."/>
        </authorList>
    </citation>
    <scope>NUCLEOTIDE SEQUENCE [LARGE SCALE GENOMIC DNA]</scope>
    <source>
        <strain>T6c / ATCC BAA-1087</strain>
    </source>
</reference>